<accession>F4JT76</accession>
<accession>O49467</accession>
<accession>Q0WUR3</accession>
<feature type="transit peptide" description="Chloroplast" evidence="2">
    <location>
        <begin position="1"/>
        <end position="87"/>
    </location>
</feature>
<feature type="chain" id="PRO_0000424847" description="Vacuolar protein sorting-associated protein 54, chloroplastic">
    <location>
        <begin position="88"/>
        <end position="1034"/>
    </location>
</feature>
<feature type="region of interest" description="Disordered" evidence="3">
    <location>
        <begin position="1"/>
        <end position="42"/>
    </location>
</feature>
<feature type="region of interest" description="Disordered" evidence="3">
    <location>
        <begin position="529"/>
        <end position="548"/>
    </location>
</feature>
<feature type="region of interest" description="Disordered" evidence="3">
    <location>
        <begin position="694"/>
        <end position="758"/>
    </location>
</feature>
<feature type="coiled-coil region" evidence="2">
    <location>
        <begin position="224"/>
        <end position="264"/>
    </location>
</feature>
<feature type="compositionally biased region" description="Low complexity" evidence="3">
    <location>
        <begin position="18"/>
        <end position="42"/>
    </location>
</feature>
<feature type="compositionally biased region" description="Polar residues" evidence="3">
    <location>
        <begin position="700"/>
        <end position="710"/>
    </location>
</feature>
<feature type="compositionally biased region" description="Basic and acidic residues" evidence="3">
    <location>
        <begin position="711"/>
        <end position="720"/>
    </location>
</feature>
<feature type="compositionally biased region" description="Polar residues" evidence="3">
    <location>
        <begin position="746"/>
        <end position="758"/>
    </location>
</feature>
<feature type="splice variant" id="VSP_053517" description="In isoform 2." evidence="7">
    <original>MDSHPSLMGRSITNSNRSSLDLGRPSSSSSSSPSPLTKSISDASSQSLSSILNNPHGGKSGVYGSDASWVGWWSSSTFVAPAEFAPVASTKLPGSELTRSDFHGYVSSISESHGRFEDIRKHTREESCGFDQESHVSGLAACLREVPSLYFKEDFALEDGATFRSACPFSSLNENLALQEKLSQYLDVVELHLVKEISVRSDSFFEAQGQLQDLNVKIVEGCSRIRELKETIRLLDRNLVDSARQIQELSSTRINMLELQRKLRLILYVNQALSALKLLVASADCAGALDITDDLQNLLAGDELTGLYCFRHLRDHVTSSIDSINSILTSEFMRISIHDTGEIDVLILSAANIRGSISSNGNTGEEVKLEEEDTSTLCDRLLPLVIGLLRTAKFPSILRMYRDTLTSEMKNAIKKAVADLLPILVARSLESDFSHGERSVDDGGGLSLASKLRTLSSEAFVNLLTAIFKIV</original>
    <variation>M</variation>
    <location>
        <begin position="1"/>
        <end position="471"/>
    </location>
</feature>
<name>VPS54_ARATH</name>
<dbReference type="EMBL" id="AL021768">
    <property type="protein sequence ID" value="CAA16926.1"/>
    <property type="status" value="ALT_SEQ"/>
    <property type="molecule type" value="Genomic_DNA"/>
</dbReference>
<dbReference type="EMBL" id="AL161551">
    <property type="protein sequence ID" value="CAB78951.1"/>
    <property type="status" value="ALT_SEQ"/>
    <property type="molecule type" value="Genomic_DNA"/>
</dbReference>
<dbReference type="EMBL" id="CP002687">
    <property type="protein sequence ID" value="AEE84188.1"/>
    <property type="molecule type" value="Genomic_DNA"/>
</dbReference>
<dbReference type="EMBL" id="CP002687">
    <property type="protein sequence ID" value="AEE84189.1"/>
    <property type="molecule type" value="Genomic_DNA"/>
</dbReference>
<dbReference type="EMBL" id="AK227083">
    <property type="protein sequence ID" value="BAE99135.1"/>
    <property type="molecule type" value="mRNA"/>
</dbReference>
<dbReference type="PIR" id="T05209">
    <property type="entry name" value="T05209"/>
</dbReference>
<dbReference type="RefSeq" id="NP_193684.4">
    <molecule id="F4JT76-1"/>
    <property type="nucleotide sequence ID" value="NM_118069.5"/>
</dbReference>
<dbReference type="RefSeq" id="NP_849409.2">
    <molecule id="F4JT76-1"/>
    <property type="nucleotide sequence ID" value="NM_179078.3"/>
</dbReference>
<dbReference type="SMR" id="F4JT76"/>
<dbReference type="BioGRID" id="12983">
    <property type="interactions" value="1"/>
</dbReference>
<dbReference type="FunCoup" id="F4JT76">
    <property type="interactions" value="4180"/>
</dbReference>
<dbReference type="IntAct" id="F4JT76">
    <property type="interactions" value="2"/>
</dbReference>
<dbReference type="STRING" id="3702.F4JT76"/>
<dbReference type="iPTMnet" id="F4JT76"/>
<dbReference type="PaxDb" id="3702-AT4G19490.2"/>
<dbReference type="ProteomicsDB" id="242741">
    <molecule id="F4JT76-1"/>
</dbReference>
<dbReference type="EnsemblPlants" id="AT4G19490.1">
    <molecule id="F4JT76-1"/>
    <property type="protein sequence ID" value="AT4G19490.1"/>
    <property type="gene ID" value="AT4G19490"/>
</dbReference>
<dbReference type="EnsemblPlants" id="AT4G19490.2">
    <molecule id="F4JT76-1"/>
    <property type="protein sequence ID" value="AT4G19490.2"/>
    <property type="gene ID" value="AT4G19490"/>
</dbReference>
<dbReference type="GeneID" id="827690"/>
<dbReference type="Gramene" id="AT4G19490.1">
    <molecule id="F4JT76-1"/>
    <property type="protein sequence ID" value="AT4G19490.1"/>
    <property type="gene ID" value="AT4G19490"/>
</dbReference>
<dbReference type="Gramene" id="AT4G19490.2">
    <molecule id="F4JT76-1"/>
    <property type="protein sequence ID" value="AT4G19490.2"/>
    <property type="gene ID" value="AT4G19490"/>
</dbReference>
<dbReference type="KEGG" id="ath:AT4G19490"/>
<dbReference type="Araport" id="AT4G19490"/>
<dbReference type="TAIR" id="AT4G19490">
    <property type="gene designation" value="VPS54"/>
</dbReference>
<dbReference type="eggNOG" id="KOG2115">
    <property type="taxonomic scope" value="Eukaryota"/>
</dbReference>
<dbReference type="HOGENOM" id="CLU_005185_2_0_1"/>
<dbReference type="InParanoid" id="F4JT76"/>
<dbReference type="OMA" id="QKQAVML"/>
<dbReference type="PRO" id="PR:F4JT76"/>
<dbReference type="Proteomes" id="UP000006548">
    <property type="component" value="Chromosome 4"/>
</dbReference>
<dbReference type="ExpressionAtlas" id="F4JT76">
    <property type="expression patterns" value="baseline and differential"/>
</dbReference>
<dbReference type="GO" id="GO:0009507">
    <property type="term" value="C:chloroplast"/>
    <property type="evidence" value="ECO:0007669"/>
    <property type="project" value="UniProtKB-SubCell"/>
</dbReference>
<dbReference type="GO" id="GO:0005829">
    <property type="term" value="C:cytosol"/>
    <property type="evidence" value="ECO:0007669"/>
    <property type="project" value="GOC"/>
</dbReference>
<dbReference type="GO" id="GO:0000938">
    <property type="term" value="C:GARP complex"/>
    <property type="evidence" value="ECO:0000314"/>
    <property type="project" value="UniProtKB"/>
</dbReference>
<dbReference type="GO" id="GO:0000139">
    <property type="term" value="C:Golgi membrane"/>
    <property type="evidence" value="ECO:0000314"/>
    <property type="project" value="UniProtKB"/>
</dbReference>
<dbReference type="GO" id="GO:0015031">
    <property type="term" value="P:protein transport"/>
    <property type="evidence" value="ECO:0007669"/>
    <property type="project" value="UniProtKB-KW"/>
</dbReference>
<dbReference type="GO" id="GO:0042147">
    <property type="term" value="P:retrograde transport, endosome to Golgi"/>
    <property type="evidence" value="ECO:0007669"/>
    <property type="project" value="InterPro"/>
</dbReference>
<dbReference type="Gene3D" id="6.10.250.860">
    <property type="match status" value="1"/>
</dbReference>
<dbReference type="InterPro" id="IPR039745">
    <property type="entry name" value="Vps54"/>
</dbReference>
<dbReference type="InterPro" id="IPR012501">
    <property type="entry name" value="Vps54_C"/>
</dbReference>
<dbReference type="PANTHER" id="PTHR12965">
    <property type="entry name" value="VACUOLAR PROTEIN SORTING 54"/>
    <property type="match status" value="1"/>
</dbReference>
<dbReference type="PANTHER" id="PTHR12965:SF0">
    <property type="entry name" value="VACUOLAR PROTEIN SORTING-ASSOCIATED PROTEIN 54"/>
    <property type="match status" value="1"/>
</dbReference>
<dbReference type="Pfam" id="PF07928">
    <property type="entry name" value="Vps54"/>
    <property type="match status" value="1"/>
</dbReference>
<evidence type="ECO:0000250" key="1"/>
<evidence type="ECO:0000255" key="2"/>
<evidence type="ECO:0000256" key="3">
    <source>
        <dbReference type="SAM" id="MobiDB-lite"/>
    </source>
</evidence>
<evidence type="ECO:0000269" key="4">
    <source>
    </source>
</evidence>
<evidence type="ECO:0000269" key="5">
    <source>
    </source>
</evidence>
<evidence type="ECO:0000269" key="6">
    <source>
    </source>
</evidence>
<evidence type="ECO:0000303" key="7">
    <source ref="3"/>
</evidence>
<evidence type="ECO:0000305" key="8"/>
<organism>
    <name type="scientific">Arabidopsis thaliana</name>
    <name type="common">Mouse-ear cress</name>
    <dbReference type="NCBI Taxonomy" id="3702"/>
    <lineage>
        <taxon>Eukaryota</taxon>
        <taxon>Viridiplantae</taxon>
        <taxon>Streptophyta</taxon>
        <taxon>Embryophyta</taxon>
        <taxon>Tracheophyta</taxon>
        <taxon>Spermatophyta</taxon>
        <taxon>Magnoliopsida</taxon>
        <taxon>eudicotyledons</taxon>
        <taxon>Gunneridae</taxon>
        <taxon>Pentapetalae</taxon>
        <taxon>rosids</taxon>
        <taxon>malvids</taxon>
        <taxon>Brassicales</taxon>
        <taxon>Brassicaceae</taxon>
        <taxon>Camelineae</taxon>
        <taxon>Arabidopsis</taxon>
    </lineage>
</organism>
<gene>
    <name type="primary">VPS54</name>
    <name type="ordered locus">At4g19490</name>
    <name type="ORF">F24J7.50</name>
</gene>
<proteinExistence type="evidence at protein level"/>
<comment type="function">
    <text evidence="1 5">Acts as a component of the GARP complex that is involved in retrograde transport from early and late endosomes to the trans-Golgi network (TGN). The GARP complex facilitates tethering as well as SNARE complex assembly at the Golgi (By similarity). Probably involved in pollen tube elongation and other polar growth.</text>
</comment>
<comment type="subunit">
    <text evidence="6">Component of the Golgi-associated retrograde protein (GARP) complex, composed by VPS52, VPS53 and VPS54. Interacts directly with VPS53.</text>
</comment>
<comment type="subcellular location">
    <subcellularLocation>
        <location>Golgi apparatus membrane</location>
        <topology>Peripheral membrane protein</topology>
    </subcellularLocation>
    <subcellularLocation>
        <location>Golgi apparatus</location>
        <location>trans-Golgi network membrane</location>
        <topology>Peripheral membrane protein</topology>
    </subcellularLocation>
    <subcellularLocation>
        <location>Plastid</location>
        <location>Chloroplast</location>
    </subcellularLocation>
    <text>Localized in the GARP complex in the Golgi and post-Golgi compartments.</text>
</comment>
<comment type="alternative products">
    <event type="alternative splicing"/>
    <isoform>
        <id>F4JT76-1</id>
        <name>1</name>
        <sequence type="displayed"/>
    </isoform>
    <isoform>
        <id>F4JT76-2</id>
        <name>2</name>
        <sequence type="described" ref="VSP_053517"/>
    </isoform>
</comment>
<comment type="tissue specificity">
    <text evidence="4">Present in pollen. Mostly expressed in roots and flower buds, and, at lower levels, in vegetative tissues and mature flowers.</text>
</comment>
<comment type="disruption phenotype">
    <text evidence="5">Lethal when homozygous. In hemizygous plants, male-specific transmission defect.</text>
</comment>
<comment type="similarity">
    <text evidence="8">Belongs to the VPS54 family.</text>
</comment>
<comment type="sequence caution" evidence="8">
    <conflict type="erroneous gene model prediction">
        <sequence resource="EMBL-CDS" id="CAA16926"/>
    </conflict>
</comment>
<comment type="sequence caution" evidence="8">
    <conflict type="erroneous gene model prediction">
        <sequence resource="EMBL-CDS" id="CAB78951"/>
    </conflict>
</comment>
<keyword id="KW-0025">Alternative splicing</keyword>
<keyword id="KW-0150">Chloroplast</keyword>
<keyword id="KW-0175">Coiled coil</keyword>
<keyword id="KW-0333">Golgi apparatus</keyword>
<keyword id="KW-0472">Membrane</keyword>
<keyword id="KW-0934">Plastid</keyword>
<keyword id="KW-0653">Protein transport</keyword>
<keyword id="KW-1185">Reference proteome</keyword>
<keyword id="KW-0809">Transit peptide</keyword>
<keyword id="KW-0813">Transport</keyword>
<protein>
    <recommendedName>
        <fullName>Vacuolar protein sorting-associated protein 54, chloroplastic</fullName>
        <shortName>AtVPS54</shortName>
    </recommendedName>
</protein>
<reference key="1">
    <citation type="journal article" date="1999" name="Nature">
        <title>Sequence and analysis of chromosome 4 of the plant Arabidopsis thaliana.</title>
        <authorList>
            <person name="Mayer K.F.X."/>
            <person name="Schueller C."/>
            <person name="Wambutt R."/>
            <person name="Murphy G."/>
            <person name="Volckaert G."/>
            <person name="Pohl T."/>
            <person name="Duesterhoeft A."/>
            <person name="Stiekema W."/>
            <person name="Entian K.-D."/>
            <person name="Terryn N."/>
            <person name="Harris B."/>
            <person name="Ansorge W."/>
            <person name="Brandt P."/>
            <person name="Grivell L.A."/>
            <person name="Rieger M."/>
            <person name="Weichselgartner M."/>
            <person name="de Simone V."/>
            <person name="Obermaier B."/>
            <person name="Mache R."/>
            <person name="Mueller M."/>
            <person name="Kreis M."/>
            <person name="Delseny M."/>
            <person name="Puigdomenech P."/>
            <person name="Watson M."/>
            <person name="Schmidtheini T."/>
            <person name="Reichert B."/>
            <person name="Portetelle D."/>
            <person name="Perez-Alonso M."/>
            <person name="Boutry M."/>
            <person name="Bancroft I."/>
            <person name="Vos P."/>
            <person name="Hoheisel J."/>
            <person name="Zimmermann W."/>
            <person name="Wedler H."/>
            <person name="Ridley P."/>
            <person name="Langham S.-A."/>
            <person name="McCullagh B."/>
            <person name="Bilham L."/>
            <person name="Robben J."/>
            <person name="van der Schueren J."/>
            <person name="Grymonprez B."/>
            <person name="Chuang Y.-J."/>
            <person name="Vandenbussche F."/>
            <person name="Braeken M."/>
            <person name="Weltjens I."/>
            <person name="Voet M."/>
            <person name="Bastiaens I."/>
            <person name="Aert R."/>
            <person name="Defoor E."/>
            <person name="Weitzenegger T."/>
            <person name="Bothe G."/>
            <person name="Ramsperger U."/>
            <person name="Hilbert H."/>
            <person name="Braun M."/>
            <person name="Holzer E."/>
            <person name="Brandt A."/>
            <person name="Peters S."/>
            <person name="van Staveren M."/>
            <person name="Dirkse W."/>
            <person name="Mooijman P."/>
            <person name="Klein Lankhorst R."/>
            <person name="Rose M."/>
            <person name="Hauf J."/>
            <person name="Koetter P."/>
            <person name="Berneiser S."/>
            <person name="Hempel S."/>
            <person name="Feldpausch M."/>
            <person name="Lamberth S."/>
            <person name="Van den Daele H."/>
            <person name="De Keyser A."/>
            <person name="Buysshaert C."/>
            <person name="Gielen J."/>
            <person name="Villarroel R."/>
            <person name="De Clercq R."/>
            <person name="van Montagu M."/>
            <person name="Rogers J."/>
            <person name="Cronin A."/>
            <person name="Quail M.A."/>
            <person name="Bray-Allen S."/>
            <person name="Clark L."/>
            <person name="Doggett J."/>
            <person name="Hall S."/>
            <person name="Kay M."/>
            <person name="Lennard N."/>
            <person name="McLay K."/>
            <person name="Mayes R."/>
            <person name="Pettett A."/>
            <person name="Rajandream M.A."/>
            <person name="Lyne M."/>
            <person name="Benes V."/>
            <person name="Rechmann S."/>
            <person name="Borkova D."/>
            <person name="Bloecker H."/>
            <person name="Scharfe M."/>
            <person name="Grimm M."/>
            <person name="Loehnert T.-H."/>
            <person name="Dose S."/>
            <person name="de Haan M."/>
            <person name="Maarse A.C."/>
            <person name="Schaefer M."/>
            <person name="Mueller-Auer S."/>
            <person name="Gabel C."/>
            <person name="Fuchs M."/>
            <person name="Fartmann B."/>
            <person name="Granderath K."/>
            <person name="Dauner D."/>
            <person name="Herzl A."/>
            <person name="Neumann S."/>
            <person name="Argiriou A."/>
            <person name="Vitale D."/>
            <person name="Liguori R."/>
            <person name="Piravandi E."/>
            <person name="Massenet O."/>
            <person name="Quigley F."/>
            <person name="Clabauld G."/>
            <person name="Muendlein A."/>
            <person name="Felber R."/>
            <person name="Schnabl S."/>
            <person name="Hiller R."/>
            <person name="Schmidt W."/>
            <person name="Lecharny A."/>
            <person name="Aubourg S."/>
            <person name="Chefdor F."/>
            <person name="Cooke R."/>
            <person name="Berger C."/>
            <person name="Monfort A."/>
            <person name="Casacuberta E."/>
            <person name="Gibbons T."/>
            <person name="Weber N."/>
            <person name="Vandenbol M."/>
            <person name="Bargues M."/>
            <person name="Terol J."/>
            <person name="Torres A."/>
            <person name="Perez-Perez A."/>
            <person name="Purnelle B."/>
            <person name="Bent E."/>
            <person name="Johnson S."/>
            <person name="Tacon D."/>
            <person name="Jesse T."/>
            <person name="Heijnen L."/>
            <person name="Schwarz S."/>
            <person name="Scholler P."/>
            <person name="Heber S."/>
            <person name="Francs P."/>
            <person name="Bielke C."/>
            <person name="Frishman D."/>
            <person name="Haase D."/>
            <person name="Lemcke K."/>
            <person name="Mewes H.-W."/>
            <person name="Stocker S."/>
            <person name="Zaccaria P."/>
            <person name="Bevan M."/>
            <person name="Wilson R.K."/>
            <person name="de la Bastide M."/>
            <person name="Habermann K."/>
            <person name="Parnell L."/>
            <person name="Dedhia N."/>
            <person name="Gnoj L."/>
            <person name="Schutz K."/>
            <person name="Huang E."/>
            <person name="Spiegel L."/>
            <person name="Sekhon M."/>
            <person name="Murray J."/>
            <person name="Sheet P."/>
            <person name="Cordes M."/>
            <person name="Abu-Threideh J."/>
            <person name="Stoneking T."/>
            <person name="Kalicki J."/>
            <person name="Graves T."/>
            <person name="Harmon G."/>
            <person name="Edwards J."/>
            <person name="Latreille P."/>
            <person name="Courtney L."/>
            <person name="Cloud J."/>
            <person name="Abbott A."/>
            <person name="Scott K."/>
            <person name="Johnson D."/>
            <person name="Minx P."/>
            <person name="Bentley D."/>
            <person name="Fulton B."/>
            <person name="Miller N."/>
            <person name="Greco T."/>
            <person name="Kemp K."/>
            <person name="Kramer J."/>
            <person name="Fulton L."/>
            <person name="Mardis E."/>
            <person name="Dante M."/>
            <person name="Pepin K."/>
            <person name="Hillier L.W."/>
            <person name="Nelson J."/>
            <person name="Spieth J."/>
            <person name="Ryan E."/>
            <person name="Andrews S."/>
            <person name="Geisel C."/>
            <person name="Layman D."/>
            <person name="Du H."/>
            <person name="Ali J."/>
            <person name="Berghoff A."/>
            <person name="Jones K."/>
            <person name="Drone K."/>
            <person name="Cotton M."/>
            <person name="Joshu C."/>
            <person name="Antonoiu B."/>
            <person name="Zidanic M."/>
            <person name="Strong C."/>
            <person name="Sun H."/>
            <person name="Lamar B."/>
            <person name="Yordan C."/>
            <person name="Ma P."/>
            <person name="Zhong J."/>
            <person name="Preston R."/>
            <person name="Vil D."/>
            <person name="Shekher M."/>
            <person name="Matero A."/>
            <person name="Shah R."/>
            <person name="Swaby I.K."/>
            <person name="O'Shaughnessy A."/>
            <person name="Rodriguez M."/>
            <person name="Hoffman J."/>
            <person name="Till S."/>
            <person name="Granat S."/>
            <person name="Shohdy N."/>
            <person name="Hasegawa A."/>
            <person name="Hameed A."/>
            <person name="Lodhi M."/>
            <person name="Johnson A."/>
            <person name="Chen E."/>
            <person name="Marra M.A."/>
            <person name="Martienssen R."/>
            <person name="McCombie W.R."/>
        </authorList>
    </citation>
    <scope>NUCLEOTIDE SEQUENCE [LARGE SCALE GENOMIC DNA]</scope>
    <source>
        <strain>cv. Columbia</strain>
    </source>
</reference>
<reference key="2">
    <citation type="journal article" date="2017" name="Plant J.">
        <title>Araport11: a complete reannotation of the Arabidopsis thaliana reference genome.</title>
        <authorList>
            <person name="Cheng C.Y."/>
            <person name="Krishnakumar V."/>
            <person name="Chan A.P."/>
            <person name="Thibaud-Nissen F."/>
            <person name="Schobel S."/>
            <person name="Town C.D."/>
        </authorList>
    </citation>
    <scope>GENOME REANNOTATION</scope>
    <source>
        <strain>cv. Columbia</strain>
    </source>
</reference>
<reference key="3">
    <citation type="submission" date="2006-07" db="EMBL/GenBank/DDBJ databases">
        <title>Large-scale analysis of RIKEN Arabidopsis full-length (RAFL) cDNAs.</title>
        <authorList>
            <person name="Totoki Y."/>
            <person name="Seki M."/>
            <person name="Ishida J."/>
            <person name="Nakajima M."/>
            <person name="Enju A."/>
            <person name="Kamiya A."/>
            <person name="Narusaka M."/>
            <person name="Shin-i T."/>
            <person name="Nakagawa M."/>
            <person name="Sakamoto N."/>
            <person name="Oishi K."/>
            <person name="Kohara Y."/>
            <person name="Kobayashi M."/>
            <person name="Toyoda A."/>
            <person name="Sakaki Y."/>
            <person name="Sakurai T."/>
            <person name="Iida K."/>
            <person name="Akiyama K."/>
            <person name="Satou M."/>
            <person name="Toyoda T."/>
            <person name="Konagaya A."/>
            <person name="Carninci P."/>
            <person name="Kawai J."/>
            <person name="Hayashizaki Y."/>
            <person name="Shinozaki K."/>
        </authorList>
    </citation>
    <scope>NUCLEOTIDE SEQUENCE [LARGE SCALE MRNA] (ISOFORM 2)</scope>
    <source>
        <strain>cv. Columbia</strain>
    </source>
</reference>
<reference key="4">
    <citation type="journal article" date="2004" name="Plant Physiol.">
        <title>The putative Arabidopsis homolog of yeast vps52p is required for pollen tube elongation, localizes to Golgi, and might be involved in vesicle trafficking.</title>
        <authorList>
            <person name="Lobstein E."/>
            <person name="Guyon A."/>
            <person name="Ferault M."/>
            <person name="Twell D."/>
            <person name="Pelletier G."/>
            <person name="Bonhomme S."/>
        </authorList>
    </citation>
    <scope>TISSUE SPECIFICITY</scope>
    <scope>GENE FAMILY</scope>
    <scope>NOMENCLATURE</scope>
</reference>
<reference key="5">
    <citation type="journal article" date="2008" name="J. Exp. Bot.">
        <title>The POK/AtVPS52 protein localizes to several distinct post-Golgi compartments in sporophytic and gametophytic cells.</title>
        <authorList>
            <person name="Guermonprez H."/>
            <person name="Smertenko A."/>
            <person name="Crosnier M.-T."/>
            <person name="Durandet M."/>
            <person name="Vrielynck N."/>
            <person name="Guerche P."/>
            <person name="Hussey P.J."/>
            <person name="Satiat-Jeunemaitre B."/>
            <person name="Bonhomme S."/>
        </authorList>
    </citation>
    <scope>FUNCTION</scope>
    <scope>DISRUPTION PHENOTYPE</scope>
    <source>
        <strain>cv. Columbia</strain>
    </source>
</reference>
<reference key="6">
    <citation type="journal article" date="2011" name="J. Exp. Bot.">
        <title>Involvement of the Arabidopsis HIT1/AtVPS53 tethering protein homologue in the acclimation of the plasma membrane to heat stress.</title>
        <authorList>
            <person name="Wang L.-C."/>
            <person name="Tsai M.-C."/>
            <person name="Chang K.-Y."/>
            <person name="Fan Y.-S."/>
            <person name="Yeh C.-H."/>
            <person name="Wu S.-J."/>
        </authorList>
    </citation>
    <scope>SUBCELLULAR LOCATION</scope>
    <scope>SUBUNIT</scope>
    <scope>INTERACTION WITH VPS53</scope>
</reference>
<sequence length="1034" mass="113865">MDSHPSLMGRSITNSNRSSLDLGRPSSSSSSSPSPLTKSISDASSQSLSSILNNPHGGKSGVYGSDASWVGWWSSSTFVAPAEFAPVASTKLPGSELTRSDFHGYVSSISESHGRFEDIRKHTREESCGFDQESHVSGLAACLREVPSLYFKEDFALEDGATFRSACPFSSLNENLALQEKLSQYLDVVELHLVKEISVRSDSFFEAQGQLQDLNVKIVEGCSRIRELKETIRLLDRNLVDSARQIQELSSTRINMLELQRKLRLILYVNQALSALKLLVASADCAGALDITDDLQNLLAGDELTGLYCFRHLRDHVTSSIDSINSILTSEFMRISIHDTGEIDVLILSAANIRGSISSNGNTGEEVKLEEEDTSTLCDRLLPLVIGLLRTAKFPSILRMYRDTLTSEMKNAIKKAVADLLPILVARSLESDFSHGERSVDDGGGLSLASKLRTLSSEAFVNLLTAIFKIVQAHLVRASEVKKAIEWILCNIDGHYAADSVAAAIAVGAVAAETAQEIGFQGGSLVSSPLGKATSKAPPLQGKSSDASSLMNMSRNFRADVLRENTEAVFAACEVTHGRWAKLLGVRALLHPKLKLQEFMSIYDLTQEFITSTEKIGGRLGSSIRGTLQSQAKAFVDSQHESRMTKLKAVLDQETWDEIDVPEEFQSIISSLFASQRLISGKVDDADLNSYHSNRLPLNGSLTSGSGDQNSELRNEKSESSEGSVVSDAQVKPTVSPESLERSKAGVSSATNNQSNQKAHGKSNLFYQGVGYHMVNCGLILLKMLSEYIDMNNSLPALSSEIVLRVVEVLRFFNTRTCQLVLGAGAMQVSGLKSIKAKHLALASQVIDFTYTIIPETRRILFSKVPETRKPLLSVEIDKVAQDFRIHRDEIYTKLVQIMRERLLAHLHGLPKVVEGWNRPPDTNKQTKEFAWPLTREVGYLHRVLSETLHEADVQAIFRQVISIIHTQTSQTLTNLEISSTEAKKRLKLHVELILKCIRSLPSDNANQSDIPNWGQLDEFFAEHFREEEAGEAE</sequence>